<evidence type="ECO:0000255" key="1">
    <source>
        <dbReference type="HAMAP-Rule" id="MF_01297"/>
    </source>
</evidence>
<evidence type="ECO:0000256" key="2">
    <source>
        <dbReference type="SAM" id="MobiDB-lite"/>
    </source>
</evidence>
<evidence type="ECO:0000305" key="3"/>
<comment type="similarity">
    <text evidence="1">Belongs to the nitrobindin family.</text>
</comment>
<comment type="caution">
    <text evidence="3">Lacks the conserved His residue that binds heme iron in the nitrobindin family.</text>
</comment>
<gene>
    <name type="ordered locus">Cgl2579</name>
    <name type="ordered locus">cg2850</name>
</gene>
<accession>Q8NMJ4</accession>
<accession>Q6M2Q5</accession>
<dbReference type="EMBL" id="BA000036">
    <property type="protein sequence ID" value="BAB99972.1"/>
    <property type="molecule type" value="Genomic_DNA"/>
</dbReference>
<dbReference type="EMBL" id="BX927155">
    <property type="protein sequence ID" value="CAF21239.1"/>
    <property type="molecule type" value="Genomic_DNA"/>
</dbReference>
<dbReference type="RefSeq" id="NP_601777.1">
    <property type="nucleotide sequence ID" value="NC_003450.3"/>
</dbReference>
<dbReference type="RefSeq" id="WP_003863137.1">
    <property type="nucleotide sequence ID" value="NC_006958.1"/>
</dbReference>
<dbReference type="SMR" id="Q8NMJ4"/>
<dbReference type="STRING" id="196627.cg2850"/>
<dbReference type="KEGG" id="cgb:cg2850"/>
<dbReference type="KEGG" id="cgl:Cgl2579"/>
<dbReference type="PATRIC" id="fig|196627.13.peg.2513"/>
<dbReference type="eggNOG" id="COG4044">
    <property type="taxonomic scope" value="Bacteria"/>
</dbReference>
<dbReference type="HOGENOM" id="CLU_085483_0_0_11"/>
<dbReference type="OrthoDB" id="4804006at2"/>
<dbReference type="BioCyc" id="CORYNE:G18NG-12195-MONOMER"/>
<dbReference type="Proteomes" id="UP000000582">
    <property type="component" value="Chromosome"/>
</dbReference>
<dbReference type="Proteomes" id="UP000001009">
    <property type="component" value="Chromosome"/>
</dbReference>
<dbReference type="CDD" id="cd07828">
    <property type="entry name" value="lipocalin_heme-bd-THAP4-like"/>
    <property type="match status" value="1"/>
</dbReference>
<dbReference type="Gene3D" id="2.40.128.20">
    <property type="match status" value="1"/>
</dbReference>
<dbReference type="HAMAP" id="MF_01297">
    <property type="entry name" value="nitrobindin"/>
    <property type="match status" value="1"/>
</dbReference>
<dbReference type="InterPro" id="IPR012674">
    <property type="entry name" value="Calycin"/>
</dbReference>
<dbReference type="InterPro" id="IPR022939">
    <property type="entry name" value="Nb(III)_bact/plant"/>
</dbReference>
<dbReference type="InterPro" id="IPR045165">
    <property type="entry name" value="Nitrobindin"/>
</dbReference>
<dbReference type="InterPro" id="IPR014878">
    <property type="entry name" value="THAP4-like_heme-bd"/>
</dbReference>
<dbReference type="PANTHER" id="PTHR15854:SF4">
    <property type="entry name" value="PEROXYNITRITE ISOMERASE THAP4"/>
    <property type="match status" value="1"/>
</dbReference>
<dbReference type="PANTHER" id="PTHR15854">
    <property type="entry name" value="THAP4 PROTEIN"/>
    <property type="match status" value="1"/>
</dbReference>
<dbReference type="Pfam" id="PF08768">
    <property type="entry name" value="THAP4_heme-bd"/>
    <property type="match status" value="1"/>
</dbReference>
<dbReference type="SUPFAM" id="SSF50814">
    <property type="entry name" value="Lipocalins"/>
    <property type="match status" value="1"/>
</dbReference>
<name>NBLIK_CORGL</name>
<organism>
    <name type="scientific">Corynebacterium glutamicum (strain ATCC 13032 / DSM 20300 / JCM 1318 / BCRC 11384 / CCUG 27702 / LMG 3730 / NBRC 12168 / NCIMB 10025 / NRRL B-2784 / 534)</name>
    <dbReference type="NCBI Taxonomy" id="196627"/>
    <lineage>
        <taxon>Bacteria</taxon>
        <taxon>Bacillati</taxon>
        <taxon>Actinomycetota</taxon>
        <taxon>Actinomycetes</taxon>
        <taxon>Mycobacteriales</taxon>
        <taxon>Corynebacteriaceae</taxon>
        <taxon>Corynebacterium</taxon>
    </lineage>
</organism>
<proteinExistence type="inferred from homology"/>
<feature type="chain" id="PRO_0000356902" description="Ferric nitrobindin-like protein">
    <location>
        <begin position="1"/>
        <end position="229"/>
    </location>
</feature>
<feature type="region of interest" description="Disordered" evidence="2">
    <location>
        <begin position="1"/>
        <end position="54"/>
    </location>
</feature>
<feature type="short sequence motif" description="GXWXGXG" evidence="1">
    <location>
        <begin position="82"/>
        <end position="88"/>
    </location>
</feature>
<feature type="compositionally biased region" description="Low complexity" evidence="2">
    <location>
        <begin position="18"/>
        <end position="33"/>
    </location>
</feature>
<keyword id="KW-1185">Reference proteome</keyword>
<reference key="1">
    <citation type="journal article" date="2003" name="Appl. Microbiol. Biotechnol.">
        <title>The Corynebacterium glutamicum genome: features and impacts on biotechnological processes.</title>
        <authorList>
            <person name="Ikeda M."/>
            <person name="Nakagawa S."/>
        </authorList>
    </citation>
    <scope>NUCLEOTIDE SEQUENCE [LARGE SCALE GENOMIC DNA]</scope>
    <source>
        <strain>ATCC 13032 / DSM 20300 / JCM 1318 / BCRC 11384 / CCUG 27702 / LMG 3730 / NBRC 12168 / NCIMB 10025 / NRRL B-2784 / 534</strain>
    </source>
</reference>
<reference key="2">
    <citation type="journal article" date="2003" name="J. Biotechnol.">
        <title>The complete Corynebacterium glutamicum ATCC 13032 genome sequence and its impact on the production of L-aspartate-derived amino acids and vitamins.</title>
        <authorList>
            <person name="Kalinowski J."/>
            <person name="Bathe B."/>
            <person name="Bartels D."/>
            <person name="Bischoff N."/>
            <person name="Bott M."/>
            <person name="Burkovski A."/>
            <person name="Dusch N."/>
            <person name="Eggeling L."/>
            <person name="Eikmanns B.J."/>
            <person name="Gaigalat L."/>
            <person name="Goesmann A."/>
            <person name="Hartmann M."/>
            <person name="Huthmacher K."/>
            <person name="Kraemer R."/>
            <person name="Linke B."/>
            <person name="McHardy A.C."/>
            <person name="Meyer F."/>
            <person name="Moeckel B."/>
            <person name="Pfefferle W."/>
            <person name="Puehler A."/>
            <person name="Rey D.A."/>
            <person name="Rueckert C."/>
            <person name="Rupp O."/>
            <person name="Sahm H."/>
            <person name="Wendisch V.F."/>
            <person name="Wiegraebe I."/>
            <person name="Tauch A."/>
        </authorList>
    </citation>
    <scope>NUCLEOTIDE SEQUENCE [LARGE SCALE GENOMIC DNA]</scope>
    <source>
        <strain>ATCC 13032 / DSM 20300 / JCM 1318 / BCRC 11384 / CCUG 27702 / LMG 3730 / NBRC 12168 / NCIMB 10025 / NRRL B-2784 / 534</strain>
    </source>
</reference>
<sequence length="229" mass="24532">MSENSTPNNPVVPGAGADGPSLSDSASISGSDAVNLAAEQSKSTAHRNIPGLGDLPIPDDTANLREGPNLHDGLLALLPLVGVWRGEGQADTAEDGQYAFGQQITFAHDGENYLSFESRMWKLDEEGNPTGVDQRESGFWRINLKDEIEFVCTHAGGVVEIYYGQPLNERAWQLESASTMVTATGPSTLGPGKRLYGLLPTNELGWVDERLVGDALKPRMSAQLTRVIG</sequence>
<protein>
    <recommendedName>
        <fullName evidence="3">Ferric nitrobindin-like protein</fullName>
    </recommendedName>
</protein>